<feature type="chain" id="PRO_0000243386" description="Large ribosomal subunit protein bL12">
    <location>
        <begin position="1"/>
        <end position="124"/>
    </location>
</feature>
<name>RL7_BACFN</name>
<sequence>MADLKAFAEQLVNLTVKEVNELATILKEEYGIEPAAAAVAVAAGPAAGAAAAEEKSSFDVVLKSAGAAKLQVVKAVKEACGLGLKEAKDMVDGAPSVVKEGLAKDEAESLKKTLEEAGAEVELK</sequence>
<reference key="1">
    <citation type="journal article" date="2005" name="Science">
        <title>Extensive DNA inversions in the B. fragilis genome control variable gene expression.</title>
        <authorList>
            <person name="Cerdeno-Tarraga A.-M."/>
            <person name="Patrick S."/>
            <person name="Crossman L.C."/>
            <person name="Blakely G."/>
            <person name="Abratt V."/>
            <person name="Lennard N."/>
            <person name="Poxton I."/>
            <person name="Duerden B."/>
            <person name="Harris B."/>
            <person name="Quail M.A."/>
            <person name="Barron A."/>
            <person name="Clark L."/>
            <person name="Corton C."/>
            <person name="Doggett J."/>
            <person name="Holden M.T.G."/>
            <person name="Larke N."/>
            <person name="Line A."/>
            <person name="Lord A."/>
            <person name="Norbertczak H."/>
            <person name="Ormond D."/>
            <person name="Price C."/>
            <person name="Rabbinowitsch E."/>
            <person name="Woodward J."/>
            <person name="Barrell B.G."/>
            <person name="Parkhill J."/>
        </authorList>
    </citation>
    <scope>NUCLEOTIDE SEQUENCE [LARGE SCALE GENOMIC DNA]</scope>
    <source>
        <strain>ATCC 25285 / DSM 2151 / CCUG 4856 / JCM 11019 / LMG 10263 / NCTC 9343 / Onslow / VPI 2553 / EN-2</strain>
    </source>
</reference>
<comment type="function">
    <text evidence="1">Forms part of the ribosomal stalk which helps the ribosome interact with GTP-bound translation factors. Is thus essential for accurate translation.</text>
</comment>
<comment type="subunit">
    <text evidence="1">Homodimer. Part of the ribosomal stalk of the 50S ribosomal subunit. Forms a multimeric L10(L12)X complex, where L10 forms an elongated spine to which 2 to 4 L12 dimers bind in a sequential fashion. Binds GTP-bound translation factors.</text>
</comment>
<comment type="similarity">
    <text evidence="1">Belongs to the bacterial ribosomal protein bL12 family.</text>
</comment>
<keyword id="KW-0687">Ribonucleoprotein</keyword>
<keyword id="KW-0689">Ribosomal protein</keyword>
<accession>Q5L896</accession>
<dbReference type="EMBL" id="CR626927">
    <property type="protein sequence ID" value="CAH09692.1"/>
    <property type="molecule type" value="Genomic_DNA"/>
</dbReference>
<dbReference type="RefSeq" id="WP_005782165.1">
    <property type="nucleotide sequence ID" value="NZ_UFTH01000001.1"/>
</dbReference>
<dbReference type="SMR" id="Q5L896"/>
<dbReference type="PaxDb" id="272559-BF9343_3911"/>
<dbReference type="GeneID" id="93105336"/>
<dbReference type="KEGG" id="bfs:BF9343_3911"/>
<dbReference type="eggNOG" id="COG0222">
    <property type="taxonomic scope" value="Bacteria"/>
</dbReference>
<dbReference type="HOGENOM" id="CLU_086499_3_1_10"/>
<dbReference type="Proteomes" id="UP000006731">
    <property type="component" value="Chromosome"/>
</dbReference>
<dbReference type="GO" id="GO:0022625">
    <property type="term" value="C:cytosolic large ribosomal subunit"/>
    <property type="evidence" value="ECO:0007669"/>
    <property type="project" value="TreeGrafter"/>
</dbReference>
<dbReference type="GO" id="GO:0003729">
    <property type="term" value="F:mRNA binding"/>
    <property type="evidence" value="ECO:0007669"/>
    <property type="project" value="TreeGrafter"/>
</dbReference>
<dbReference type="GO" id="GO:0003735">
    <property type="term" value="F:structural constituent of ribosome"/>
    <property type="evidence" value="ECO:0007669"/>
    <property type="project" value="InterPro"/>
</dbReference>
<dbReference type="GO" id="GO:0006412">
    <property type="term" value="P:translation"/>
    <property type="evidence" value="ECO:0007669"/>
    <property type="project" value="UniProtKB-UniRule"/>
</dbReference>
<dbReference type="CDD" id="cd00387">
    <property type="entry name" value="Ribosomal_L7_L12"/>
    <property type="match status" value="1"/>
</dbReference>
<dbReference type="FunFam" id="1.20.5.710:FF:000011">
    <property type="entry name" value="50S ribosomal protein L7/L12"/>
    <property type="match status" value="1"/>
</dbReference>
<dbReference type="FunFam" id="3.30.1390.10:FF:000001">
    <property type="entry name" value="50S ribosomal protein L7/L12"/>
    <property type="match status" value="1"/>
</dbReference>
<dbReference type="Gene3D" id="3.30.1390.10">
    <property type="match status" value="1"/>
</dbReference>
<dbReference type="Gene3D" id="1.20.5.710">
    <property type="entry name" value="Single helix bin"/>
    <property type="match status" value="1"/>
</dbReference>
<dbReference type="HAMAP" id="MF_00368">
    <property type="entry name" value="Ribosomal_bL12"/>
    <property type="match status" value="1"/>
</dbReference>
<dbReference type="InterPro" id="IPR000206">
    <property type="entry name" value="Ribosomal_bL12"/>
</dbReference>
<dbReference type="InterPro" id="IPR013823">
    <property type="entry name" value="Ribosomal_bL12_C"/>
</dbReference>
<dbReference type="InterPro" id="IPR014719">
    <property type="entry name" value="Ribosomal_bL12_C/ClpS-like"/>
</dbReference>
<dbReference type="InterPro" id="IPR008932">
    <property type="entry name" value="Ribosomal_bL12_oligo"/>
</dbReference>
<dbReference type="InterPro" id="IPR036235">
    <property type="entry name" value="Ribosomal_bL12_oligo_N_sf"/>
</dbReference>
<dbReference type="NCBIfam" id="TIGR00855">
    <property type="entry name" value="L12"/>
    <property type="match status" value="1"/>
</dbReference>
<dbReference type="PANTHER" id="PTHR45987">
    <property type="entry name" value="39S RIBOSOMAL PROTEIN L12"/>
    <property type="match status" value="1"/>
</dbReference>
<dbReference type="PANTHER" id="PTHR45987:SF4">
    <property type="entry name" value="LARGE RIBOSOMAL SUBUNIT PROTEIN BL12M"/>
    <property type="match status" value="1"/>
</dbReference>
<dbReference type="Pfam" id="PF00542">
    <property type="entry name" value="Ribosomal_L12"/>
    <property type="match status" value="1"/>
</dbReference>
<dbReference type="Pfam" id="PF16320">
    <property type="entry name" value="Ribosomal_L12_N"/>
    <property type="match status" value="1"/>
</dbReference>
<dbReference type="SUPFAM" id="SSF54736">
    <property type="entry name" value="ClpS-like"/>
    <property type="match status" value="1"/>
</dbReference>
<dbReference type="SUPFAM" id="SSF48300">
    <property type="entry name" value="Ribosomal protein L7/12, oligomerisation (N-terminal) domain"/>
    <property type="match status" value="1"/>
</dbReference>
<protein>
    <recommendedName>
        <fullName evidence="1">Large ribosomal subunit protein bL12</fullName>
    </recommendedName>
    <alternativeName>
        <fullName evidence="2">50S ribosomal protein L7/L12</fullName>
    </alternativeName>
</protein>
<gene>
    <name evidence="1" type="primary">rplL</name>
    <name type="ordered locus">BF4016</name>
</gene>
<evidence type="ECO:0000255" key="1">
    <source>
        <dbReference type="HAMAP-Rule" id="MF_00368"/>
    </source>
</evidence>
<evidence type="ECO:0000305" key="2"/>
<proteinExistence type="inferred from homology"/>
<organism>
    <name type="scientific">Bacteroides fragilis (strain ATCC 25285 / DSM 2151 / CCUG 4856 / JCM 11019 / LMG 10263 / NCTC 9343 / Onslow / VPI 2553 / EN-2)</name>
    <dbReference type="NCBI Taxonomy" id="272559"/>
    <lineage>
        <taxon>Bacteria</taxon>
        <taxon>Pseudomonadati</taxon>
        <taxon>Bacteroidota</taxon>
        <taxon>Bacteroidia</taxon>
        <taxon>Bacteroidales</taxon>
        <taxon>Bacteroidaceae</taxon>
        <taxon>Bacteroides</taxon>
    </lineage>
</organism>